<accession>Q3SGU8</accession>
<dbReference type="EMBL" id="CP000116">
    <property type="protein sequence ID" value="AAZ98145.1"/>
    <property type="molecule type" value="Genomic_DNA"/>
</dbReference>
<dbReference type="RefSeq" id="WP_011312704.1">
    <property type="nucleotide sequence ID" value="NC_007404.1"/>
</dbReference>
<dbReference type="SMR" id="Q3SGU8"/>
<dbReference type="STRING" id="292415.Tbd_2192"/>
<dbReference type="KEGG" id="tbd:Tbd_2192"/>
<dbReference type="eggNOG" id="COG0781">
    <property type="taxonomic scope" value="Bacteria"/>
</dbReference>
<dbReference type="HOGENOM" id="CLU_087843_4_1_4"/>
<dbReference type="OrthoDB" id="9789556at2"/>
<dbReference type="Proteomes" id="UP000008291">
    <property type="component" value="Chromosome"/>
</dbReference>
<dbReference type="GO" id="GO:0005829">
    <property type="term" value="C:cytosol"/>
    <property type="evidence" value="ECO:0007669"/>
    <property type="project" value="TreeGrafter"/>
</dbReference>
<dbReference type="GO" id="GO:0003723">
    <property type="term" value="F:RNA binding"/>
    <property type="evidence" value="ECO:0007669"/>
    <property type="project" value="UniProtKB-UniRule"/>
</dbReference>
<dbReference type="GO" id="GO:0006353">
    <property type="term" value="P:DNA-templated transcription termination"/>
    <property type="evidence" value="ECO:0007669"/>
    <property type="project" value="UniProtKB-UniRule"/>
</dbReference>
<dbReference type="GO" id="GO:0031564">
    <property type="term" value="P:transcription antitermination"/>
    <property type="evidence" value="ECO:0007669"/>
    <property type="project" value="UniProtKB-KW"/>
</dbReference>
<dbReference type="Gene3D" id="1.10.940.10">
    <property type="entry name" value="NusB-like"/>
    <property type="match status" value="1"/>
</dbReference>
<dbReference type="HAMAP" id="MF_00073">
    <property type="entry name" value="NusB"/>
    <property type="match status" value="1"/>
</dbReference>
<dbReference type="InterPro" id="IPR035926">
    <property type="entry name" value="NusB-like_sf"/>
</dbReference>
<dbReference type="InterPro" id="IPR011605">
    <property type="entry name" value="NusB_fam"/>
</dbReference>
<dbReference type="InterPro" id="IPR006027">
    <property type="entry name" value="NusB_RsmB_TIM44"/>
</dbReference>
<dbReference type="NCBIfam" id="TIGR01951">
    <property type="entry name" value="nusB"/>
    <property type="match status" value="1"/>
</dbReference>
<dbReference type="PANTHER" id="PTHR11078:SF3">
    <property type="entry name" value="ANTITERMINATION NUSB DOMAIN-CONTAINING PROTEIN"/>
    <property type="match status" value="1"/>
</dbReference>
<dbReference type="PANTHER" id="PTHR11078">
    <property type="entry name" value="N UTILIZATION SUBSTANCE PROTEIN B-RELATED"/>
    <property type="match status" value="1"/>
</dbReference>
<dbReference type="Pfam" id="PF01029">
    <property type="entry name" value="NusB"/>
    <property type="match status" value="1"/>
</dbReference>
<dbReference type="SUPFAM" id="SSF48013">
    <property type="entry name" value="NusB-like"/>
    <property type="match status" value="1"/>
</dbReference>
<name>NUSB_THIDA</name>
<organism>
    <name type="scientific">Thiobacillus denitrificans (strain ATCC 25259 / T1)</name>
    <dbReference type="NCBI Taxonomy" id="292415"/>
    <lineage>
        <taxon>Bacteria</taxon>
        <taxon>Pseudomonadati</taxon>
        <taxon>Pseudomonadota</taxon>
        <taxon>Betaproteobacteria</taxon>
        <taxon>Nitrosomonadales</taxon>
        <taxon>Thiobacillaceae</taxon>
        <taxon>Thiobacillus</taxon>
    </lineage>
</organism>
<comment type="function">
    <text evidence="1">Involved in transcription antitermination. Required for transcription of ribosomal RNA (rRNA) genes. Binds specifically to the boxA antiterminator sequence of the ribosomal RNA (rrn) operons.</text>
</comment>
<comment type="similarity">
    <text evidence="1">Belongs to the NusB family.</text>
</comment>
<feature type="chain" id="PRO_0000265619" description="Transcription antitermination protein NusB">
    <location>
        <begin position="1"/>
        <end position="145"/>
    </location>
</feature>
<keyword id="KW-1185">Reference proteome</keyword>
<keyword id="KW-0694">RNA-binding</keyword>
<keyword id="KW-0804">Transcription</keyword>
<keyword id="KW-0889">Transcription antitermination</keyword>
<keyword id="KW-0805">Transcription regulation</keyword>
<sequence length="145" mass="16244">MAGSRKVAREFTLQGIYAWMIGGADVTLIAANLKEDEQFKRADEAYFRTLLYGVLKEEDMLSSRIAPLLDRAVAELSPIERSILLIGAYELLHCPDVPWRVAINESVELAKKFGGTDGHKYINGVLDKLAQDVRAVEIEHAKKRD</sequence>
<reference key="1">
    <citation type="journal article" date="2006" name="J. Bacteriol.">
        <title>The genome sequence of the obligately chemolithoautotrophic, facultatively anaerobic bacterium Thiobacillus denitrificans.</title>
        <authorList>
            <person name="Beller H.R."/>
            <person name="Chain P.S."/>
            <person name="Letain T.E."/>
            <person name="Chakicherla A."/>
            <person name="Larimer F.W."/>
            <person name="Richardson P.M."/>
            <person name="Coleman M.A."/>
            <person name="Wood A.P."/>
            <person name="Kelly D.P."/>
        </authorList>
    </citation>
    <scope>NUCLEOTIDE SEQUENCE [LARGE SCALE GENOMIC DNA]</scope>
    <source>
        <strain>ATCC 25259 / T1</strain>
    </source>
</reference>
<proteinExistence type="inferred from homology"/>
<gene>
    <name evidence="1" type="primary">nusB</name>
    <name type="ordered locus">Tbd_2192</name>
</gene>
<evidence type="ECO:0000255" key="1">
    <source>
        <dbReference type="HAMAP-Rule" id="MF_00073"/>
    </source>
</evidence>
<protein>
    <recommendedName>
        <fullName evidence="1">Transcription antitermination protein NusB</fullName>
    </recommendedName>
    <alternativeName>
        <fullName evidence="1">Antitermination factor NusB</fullName>
    </alternativeName>
</protein>